<proteinExistence type="predicted"/>
<name>Y070_SIFVH</name>
<dbReference type="EMBL" id="AF440571">
    <property type="protein sequence ID" value="AAL27779.1"/>
    <property type="molecule type" value="Genomic_DNA"/>
</dbReference>
<dbReference type="RefSeq" id="NP_445733.1">
    <property type="nucleotide sequence ID" value="NC_003214.2"/>
</dbReference>
<dbReference type="SMR" id="Q914G2"/>
<dbReference type="GeneID" id="922336"/>
<dbReference type="KEGG" id="vg:922336"/>
<dbReference type="Proteomes" id="UP000007017">
    <property type="component" value="Segment"/>
</dbReference>
<keyword id="KW-1185">Reference proteome</keyword>
<accession>Q914G2</accession>
<sequence length="81" mass="9230">MIIHTVTVVDGNGNVLVKREFSSSVERQTYADILVDVISYIEGRKVKHVEKEILKENPDLRTKLSSAREIEDKFVVAEMVI</sequence>
<reference key="1">
    <citation type="journal article" date="2000" name="Virology">
        <title>A novel lipothrixvirus, SIFV, of the extremely thermophilic crenarchaeon Sulfolobus.</title>
        <authorList>
            <person name="Arnold H.P."/>
            <person name="Zillig W."/>
            <person name="Ziese U."/>
            <person name="Holz I."/>
            <person name="Crosby M."/>
            <person name="Utterback T."/>
            <person name="Weidmann J.F."/>
            <person name="Umayam L.A."/>
            <person name="Teffera K."/>
            <person name="Kristjanson J.K."/>
            <person name="Klenk H.P."/>
            <person name="Nelson K.E."/>
            <person name="Fraser C.M."/>
        </authorList>
    </citation>
    <scope>NUCLEOTIDE SEQUENCE [GENOMIC DNA]</scope>
</reference>
<feature type="chain" id="PRO_0000385445" description="Uncharacterized protein 70">
    <location>
        <begin position="1"/>
        <end position="81"/>
    </location>
</feature>
<organism>
    <name type="scientific">Sulfolobus islandicus filamentous virus (isolate Iceland/Hveragerdi)</name>
    <name type="common">SIFV</name>
    <dbReference type="NCBI Taxonomy" id="654908"/>
    <lineage>
        <taxon>Viruses</taxon>
        <taxon>Adnaviria</taxon>
        <taxon>Zilligvirae</taxon>
        <taxon>Taleaviricota</taxon>
        <taxon>Tokiviricetes</taxon>
        <taxon>Ligamenvirales</taxon>
        <taxon>Lipothrixviridae</taxon>
        <taxon>Betalipothrixvirus</taxon>
        <taxon>Sulfolobus islandicus filamentous virus</taxon>
    </lineage>
</organism>
<organismHost>
    <name type="scientific">Saccharolobus islandicus</name>
    <name type="common">Sulfolobus islandicus</name>
    <dbReference type="NCBI Taxonomy" id="43080"/>
</organismHost>
<gene>
    <name type="primary">SIFV0070</name>
</gene>
<protein>
    <recommendedName>
        <fullName>Uncharacterized protein 70</fullName>
    </recommendedName>
</protein>